<gene>
    <name evidence="1" type="primary">ispG</name>
    <name type="ordered locus">PCC8801_2798</name>
</gene>
<sequence length="406" mass="44872">MQTLETPKPLTNTSPEFDTTIHRRQTRPVKVGDITIGGGYPVVVQSMINEDTLDIEGSVAGIRRLHEIGCEIVRVTVPSMAHAKALAEINQKLAEVYRRVPLVADVHHNGLKIALEVAKHVDKVRINPGLYVFEKPSTTRSEYTQAEFDEIGEKISETLKPLVVSLRDQGKAMRIGVNHGSLAERMLFTYGDTPEGMVESALEFIRICESLDFRNLVISLKASRVPVMLAAYRLMVKRMDELGMDYPLHLGVTEAGDGEYGRIKSTAGIATLLAEGIGDTIRVSLTEAPEKEIPVCYSILQALGLRKTMVEYVACPSCGRTLFNLEEVLHKVREATKHLTGLDIAVMGCIVNGPGEMADADYGYVGKQAGYISLYRGREEIKRVPEDQGVQELIELIKADGRWVEP</sequence>
<proteinExistence type="inferred from homology"/>
<evidence type="ECO:0000255" key="1">
    <source>
        <dbReference type="HAMAP-Rule" id="MF_00159"/>
    </source>
</evidence>
<accession>B7K5R5</accession>
<feature type="chain" id="PRO_1000118165" description="4-hydroxy-3-methylbut-2-en-1-yl diphosphate synthase (ferredoxin)">
    <location>
        <begin position="1"/>
        <end position="406"/>
    </location>
</feature>
<feature type="binding site" evidence="1">
    <location>
        <position position="315"/>
    </location>
    <ligand>
        <name>[4Fe-4S] cluster</name>
        <dbReference type="ChEBI" id="CHEBI:49883"/>
    </ligand>
</feature>
<feature type="binding site" evidence="1">
    <location>
        <position position="318"/>
    </location>
    <ligand>
        <name>[4Fe-4S] cluster</name>
        <dbReference type="ChEBI" id="CHEBI:49883"/>
    </ligand>
</feature>
<feature type="binding site" evidence="1">
    <location>
        <position position="349"/>
    </location>
    <ligand>
        <name>[4Fe-4S] cluster</name>
        <dbReference type="ChEBI" id="CHEBI:49883"/>
    </ligand>
</feature>
<feature type="binding site" evidence="1">
    <location>
        <position position="356"/>
    </location>
    <ligand>
        <name>[4Fe-4S] cluster</name>
        <dbReference type="ChEBI" id="CHEBI:49883"/>
    </ligand>
</feature>
<name>ISPG_RIPO1</name>
<keyword id="KW-0004">4Fe-4S</keyword>
<keyword id="KW-0408">Iron</keyword>
<keyword id="KW-0411">Iron-sulfur</keyword>
<keyword id="KW-0414">Isoprene biosynthesis</keyword>
<keyword id="KW-0479">Metal-binding</keyword>
<keyword id="KW-0560">Oxidoreductase</keyword>
<keyword id="KW-1185">Reference proteome</keyword>
<comment type="function">
    <text evidence="1">Converts 2C-methyl-D-erythritol 2,4-cyclodiphosphate (ME-2,4cPP) into 1-hydroxy-2-methyl-2-(E)-butenyl 4-diphosphate.</text>
</comment>
<comment type="catalytic activity">
    <reaction evidence="1">
        <text>(2E)-4-hydroxy-3-methylbut-2-enyl diphosphate + 2 oxidized [2Fe-2S]-[ferredoxin] + H2O = 2-C-methyl-D-erythritol 2,4-cyclic diphosphate + 2 reduced [2Fe-2S]-[ferredoxin] + H(+)</text>
        <dbReference type="Rhea" id="RHEA:26119"/>
        <dbReference type="Rhea" id="RHEA-COMP:10000"/>
        <dbReference type="Rhea" id="RHEA-COMP:10001"/>
        <dbReference type="ChEBI" id="CHEBI:15377"/>
        <dbReference type="ChEBI" id="CHEBI:15378"/>
        <dbReference type="ChEBI" id="CHEBI:33737"/>
        <dbReference type="ChEBI" id="CHEBI:33738"/>
        <dbReference type="ChEBI" id="CHEBI:58483"/>
        <dbReference type="ChEBI" id="CHEBI:128753"/>
        <dbReference type="EC" id="1.17.7.1"/>
    </reaction>
</comment>
<comment type="cofactor">
    <cofactor evidence="1">
        <name>[4Fe-4S] cluster</name>
        <dbReference type="ChEBI" id="CHEBI:49883"/>
    </cofactor>
    <text evidence="1">Binds 1 [4Fe-4S] cluster.</text>
</comment>
<comment type="pathway">
    <text evidence="1">Isoprenoid biosynthesis; isopentenyl diphosphate biosynthesis via DXP pathway; isopentenyl diphosphate from 1-deoxy-D-xylulose 5-phosphate: step 5/6.</text>
</comment>
<comment type="similarity">
    <text evidence="1">Belongs to the IspG family.</text>
</comment>
<protein>
    <recommendedName>
        <fullName evidence="1">4-hydroxy-3-methylbut-2-en-1-yl diphosphate synthase (ferredoxin)</fullName>
        <ecNumber evidence="1">1.17.7.1</ecNumber>
    </recommendedName>
    <alternativeName>
        <fullName evidence="1">1-hydroxy-2-methyl-2-(E)-butenyl 4-diphosphate synthase</fullName>
    </alternativeName>
</protein>
<organism>
    <name type="scientific">Rippkaea orientalis (strain PCC 8801 / RF-1)</name>
    <name type="common">Cyanothece sp. (strain PCC 8801)</name>
    <dbReference type="NCBI Taxonomy" id="41431"/>
    <lineage>
        <taxon>Bacteria</taxon>
        <taxon>Bacillati</taxon>
        <taxon>Cyanobacteriota</taxon>
        <taxon>Cyanophyceae</taxon>
        <taxon>Oscillatoriophycideae</taxon>
        <taxon>Chroococcales</taxon>
        <taxon>Aphanothecaceae</taxon>
        <taxon>Rippkaea</taxon>
        <taxon>Rippkaea orientalis</taxon>
    </lineage>
</organism>
<reference key="1">
    <citation type="journal article" date="2011" name="MBio">
        <title>Novel metabolic attributes of the genus Cyanothece, comprising a group of unicellular nitrogen-fixing Cyanobacteria.</title>
        <authorList>
            <person name="Bandyopadhyay A."/>
            <person name="Elvitigala T."/>
            <person name="Welsh E."/>
            <person name="Stockel J."/>
            <person name="Liberton M."/>
            <person name="Min H."/>
            <person name="Sherman L.A."/>
            <person name="Pakrasi H.B."/>
        </authorList>
    </citation>
    <scope>NUCLEOTIDE SEQUENCE [LARGE SCALE GENOMIC DNA]</scope>
    <source>
        <strain>PCC 8801 / RF-1</strain>
    </source>
</reference>
<dbReference type="EC" id="1.17.7.1" evidence="1"/>
<dbReference type="EMBL" id="CP001287">
    <property type="protein sequence ID" value="ACK66798.1"/>
    <property type="molecule type" value="Genomic_DNA"/>
</dbReference>
<dbReference type="RefSeq" id="WP_012596064.1">
    <property type="nucleotide sequence ID" value="NC_011726.1"/>
</dbReference>
<dbReference type="SMR" id="B7K5R5"/>
<dbReference type="STRING" id="41431.PCC8801_2798"/>
<dbReference type="KEGG" id="cyp:PCC8801_2798"/>
<dbReference type="eggNOG" id="COG0821">
    <property type="taxonomic scope" value="Bacteria"/>
</dbReference>
<dbReference type="HOGENOM" id="CLU_042258_0_0_3"/>
<dbReference type="OrthoDB" id="9803214at2"/>
<dbReference type="UniPathway" id="UPA00056">
    <property type="reaction ID" value="UER00096"/>
</dbReference>
<dbReference type="Proteomes" id="UP000008204">
    <property type="component" value="Chromosome"/>
</dbReference>
<dbReference type="GO" id="GO:0051539">
    <property type="term" value="F:4 iron, 4 sulfur cluster binding"/>
    <property type="evidence" value="ECO:0007669"/>
    <property type="project" value="UniProtKB-UniRule"/>
</dbReference>
<dbReference type="GO" id="GO:0046429">
    <property type="term" value="F:4-hydroxy-3-methylbut-2-en-1-yl diphosphate synthase activity (ferredoxin)"/>
    <property type="evidence" value="ECO:0007669"/>
    <property type="project" value="UniProtKB-UniRule"/>
</dbReference>
<dbReference type="GO" id="GO:0005506">
    <property type="term" value="F:iron ion binding"/>
    <property type="evidence" value="ECO:0007669"/>
    <property type="project" value="InterPro"/>
</dbReference>
<dbReference type="GO" id="GO:0019288">
    <property type="term" value="P:isopentenyl diphosphate biosynthetic process, methylerythritol 4-phosphate pathway"/>
    <property type="evidence" value="ECO:0007669"/>
    <property type="project" value="UniProtKB-UniRule"/>
</dbReference>
<dbReference type="GO" id="GO:0016114">
    <property type="term" value="P:terpenoid biosynthetic process"/>
    <property type="evidence" value="ECO:0007669"/>
    <property type="project" value="InterPro"/>
</dbReference>
<dbReference type="FunFam" id="3.20.20.20:FF:000005">
    <property type="entry name" value="4-hydroxy-3-methylbut-2-en-1-yl diphosphate synthase (flavodoxin)"/>
    <property type="match status" value="1"/>
</dbReference>
<dbReference type="FunFam" id="3.30.413.10:FF:000006">
    <property type="entry name" value="4-hydroxy-3-methylbut-2-en-1-yl diphosphate synthase (flavodoxin)"/>
    <property type="match status" value="1"/>
</dbReference>
<dbReference type="Gene3D" id="3.20.20.20">
    <property type="entry name" value="Dihydropteroate synthase-like"/>
    <property type="match status" value="1"/>
</dbReference>
<dbReference type="Gene3D" id="3.30.413.10">
    <property type="entry name" value="Sulfite Reductase Hemoprotein, domain 1"/>
    <property type="match status" value="1"/>
</dbReference>
<dbReference type="HAMAP" id="MF_00159">
    <property type="entry name" value="IspG"/>
    <property type="match status" value="1"/>
</dbReference>
<dbReference type="InterPro" id="IPR011005">
    <property type="entry name" value="Dihydropteroate_synth-like_sf"/>
</dbReference>
<dbReference type="InterPro" id="IPR016425">
    <property type="entry name" value="IspG_bac"/>
</dbReference>
<dbReference type="InterPro" id="IPR004588">
    <property type="entry name" value="IspG_bac-typ"/>
</dbReference>
<dbReference type="InterPro" id="IPR045854">
    <property type="entry name" value="NO2/SO3_Rdtase_4Fe4S_sf"/>
</dbReference>
<dbReference type="NCBIfam" id="TIGR00612">
    <property type="entry name" value="ispG_gcpE"/>
    <property type="match status" value="1"/>
</dbReference>
<dbReference type="NCBIfam" id="NF001540">
    <property type="entry name" value="PRK00366.1"/>
    <property type="match status" value="1"/>
</dbReference>
<dbReference type="PANTHER" id="PTHR30454">
    <property type="entry name" value="4-HYDROXY-3-METHYLBUT-2-EN-1-YL DIPHOSPHATE SYNTHASE"/>
    <property type="match status" value="1"/>
</dbReference>
<dbReference type="PANTHER" id="PTHR30454:SF0">
    <property type="entry name" value="4-HYDROXY-3-METHYLBUT-2-EN-1-YL DIPHOSPHATE SYNTHASE (FERREDOXIN), CHLOROPLASTIC"/>
    <property type="match status" value="1"/>
</dbReference>
<dbReference type="Pfam" id="PF04551">
    <property type="entry name" value="GcpE"/>
    <property type="match status" value="1"/>
</dbReference>
<dbReference type="PIRSF" id="PIRSF004640">
    <property type="entry name" value="IspG"/>
    <property type="match status" value="1"/>
</dbReference>
<dbReference type="SUPFAM" id="SSF56014">
    <property type="entry name" value="Nitrite and sulphite reductase 4Fe-4S domain-like"/>
    <property type="match status" value="1"/>
</dbReference>